<organism>
    <name type="scientific">Mycobacterium ulcerans (strain Agy99)</name>
    <dbReference type="NCBI Taxonomy" id="362242"/>
    <lineage>
        <taxon>Bacteria</taxon>
        <taxon>Bacillati</taxon>
        <taxon>Actinomycetota</taxon>
        <taxon>Actinomycetes</taxon>
        <taxon>Mycobacteriales</taxon>
        <taxon>Mycobacteriaceae</taxon>
        <taxon>Mycobacterium</taxon>
        <taxon>Mycobacterium ulcerans group</taxon>
    </lineage>
</organism>
<keyword id="KW-0963">Cytoplasm</keyword>
<keyword id="KW-0251">Elongation factor</keyword>
<keyword id="KW-0342">GTP-binding</keyword>
<keyword id="KW-0547">Nucleotide-binding</keyword>
<keyword id="KW-0648">Protein biosynthesis</keyword>
<protein>
    <recommendedName>
        <fullName evidence="1">Elongation factor G</fullName>
        <shortName evidence="1">EF-G</shortName>
    </recommendedName>
</protein>
<feature type="chain" id="PRO_1000008857" description="Elongation factor G">
    <location>
        <begin position="1"/>
        <end position="701"/>
    </location>
</feature>
<feature type="domain" description="tr-type G">
    <location>
        <begin position="11"/>
        <end position="287"/>
    </location>
</feature>
<feature type="binding site" evidence="1">
    <location>
        <begin position="20"/>
        <end position="27"/>
    </location>
    <ligand>
        <name>GTP</name>
        <dbReference type="ChEBI" id="CHEBI:37565"/>
    </ligand>
</feature>
<feature type="binding site" evidence="1">
    <location>
        <begin position="84"/>
        <end position="88"/>
    </location>
    <ligand>
        <name>GTP</name>
        <dbReference type="ChEBI" id="CHEBI:37565"/>
    </ligand>
</feature>
<feature type="binding site" evidence="1">
    <location>
        <begin position="138"/>
        <end position="141"/>
    </location>
    <ligand>
        <name>GTP</name>
        <dbReference type="ChEBI" id="CHEBI:37565"/>
    </ligand>
</feature>
<gene>
    <name evidence="1" type="primary">fusA</name>
    <name type="ordered locus">MUL_0765</name>
</gene>
<comment type="function">
    <text evidence="1">Catalyzes the GTP-dependent ribosomal translocation step during translation elongation. During this step, the ribosome changes from the pre-translocational (PRE) to the post-translocational (POST) state as the newly formed A-site-bound peptidyl-tRNA and P-site-bound deacylated tRNA move to the P and E sites, respectively. Catalyzes the coordinated movement of the two tRNA molecules, the mRNA and conformational changes in the ribosome.</text>
</comment>
<comment type="subcellular location">
    <subcellularLocation>
        <location evidence="1">Cytoplasm</location>
    </subcellularLocation>
</comment>
<comment type="similarity">
    <text evidence="1">Belongs to the TRAFAC class translation factor GTPase superfamily. Classic translation factor GTPase family. EF-G/EF-2 subfamily.</text>
</comment>
<accession>A0PM41</accession>
<name>EFG_MYCUA</name>
<reference key="1">
    <citation type="journal article" date="2007" name="Genome Res.">
        <title>Reductive evolution and niche adaptation inferred from the genome of Mycobacterium ulcerans, the causative agent of Buruli ulcer.</title>
        <authorList>
            <person name="Stinear T.P."/>
            <person name="Seemann T."/>
            <person name="Pidot S."/>
            <person name="Frigui W."/>
            <person name="Reysset G."/>
            <person name="Garnier T."/>
            <person name="Meurice G."/>
            <person name="Simon D."/>
            <person name="Bouchier C."/>
            <person name="Ma L."/>
            <person name="Tichit M."/>
            <person name="Porter J.L."/>
            <person name="Ryan J."/>
            <person name="Johnson P.D.R."/>
            <person name="Davies J.K."/>
            <person name="Jenkin G.A."/>
            <person name="Small P.L.C."/>
            <person name="Jones L.M."/>
            <person name="Tekaia F."/>
            <person name="Laval F."/>
            <person name="Daffe M."/>
            <person name="Parkhill J."/>
            <person name="Cole S.T."/>
        </authorList>
    </citation>
    <scope>NUCLEOTIDE SEQUENCE [LARGE SCALE GENOMIC DNA]</scope>
    <source>
        <strain>Agy99</strain>
    </source>
</reference>
<proteinExistence type="inferred from homology"/>
<sequence length="701" mass="76938">MAQKDVLTDLTKVRNIGIMAHIDAGKTTTTERILYYTGISYKIGEVHDGAATMDWMEQEQERGITITSAATTCFWNDNQINIIDTPGHVDFTVEVERSLRVLDGAVAVFDGKEGVEPQSEQVWRQADKYDVPRICFVNKMDKIGADFYFSVRTMEERLGANVIPIQLPVGSEGDFEGVVDLVEMKAKVWSADAKLGEKYDVVDIPADLQEKADEYRTKLLEAVAETDEALLEKYLGGEELTEAEIKGAIRKLTITSEAYPVLCGSAFKNKGVQPMLDAVIDYLPSPLDVPAAIGHVPGKEDEEVVRKPSTDEPFSALAFKVATHPFFGKLTYVRVYSGKVDSGSQVINSTKGKKERLGKLFQMHSNKESPVETASAGHIYAVIGLKDTTTGDTLSDPNNQIVLESMTFPDPVIEVAIEPKTKSDQEKLSLSIQKLAEEDPTFKVHLDQETGQTVIGGMGELHLDILVDRMRREFKVEANVGKPQVAYKETIKRLVEKVEFTHKKQTGGSGQFAKVLISIEPFTGEDGATYEFESKVTGGRIPREYIPSVDAGAQDAMQYGVLAGYPLVNLKVTLLDGAFHEVDSSEMAFKIAGSQVLKKAAAAAHPVILEPIMAVEVTTPEDYMGDVIGDLNSRRGQIQAMEERSGARVVKAHVPLSEMFGYVGDLRSKTQGRANYSMVFDSYAEVPANVSKEIIAKATGE</sequence>
<evidence type="ECO:0000255" key="1">
    <source>
        <dbReference type="HAMAP-Rule" id="MF_00054"/>
    </source>
</evidence>
<dbReference type="EMBL" id="CP000325">
    <property type="protein sequence ID" value="ABL03410.1"/>
    <property type="molecule type" value="Genomic_DNA"/>
</dbReference>
<dbReference type="RefSeq" id="WP_011739035.1">
    <property type="nucleotide sequence ID" value="NC_008611.1"/>
</dbReference>
<dbReference type="SMR" id="A0PM41"/>
<dbReference type="KEGG" id="mul:MUL_0765"/>
<dbReference type="eggNOG" id="COG0480">
    <property type="taxonomic scope" value="Bacteria"/>
</dbReference>
<dbReference type="HOGENOM" id="CLU_002794_4_1_11"/>
<dbReference type="Proteomes" id="UP000000765">
    <property type="component" value="Chromosome"/>
</dbReference>
<dbReference type="GO" id="GO:0005737">
    <property type="term" value="C:cytoplasm"/>
    <property type="evidence" value="ECO:0007669"/>
    <property type="project" value="UniProtKB-SubCell"/>
</dbReference>
<dbReference type="GO" id="GO:0005525">
    <property type="term" value="F:GTP binding"/>
    <property type="evidence" value="ECO:0007669"/>
    <property type="project" value="UniProtKB-UniRule"/>
</dbReference>
<dbReference type="GO" id="GO:0003924">
    <property type="term" value="F:GTPase activity"/>
    <property type="evidence" value="ECO:0007669"/>
    <property type="project" value="InterPro"/>
</dbReference>
<dbReference type="GO" id="GO:0003746">
    <property type="term" value="F:translation elongation factor activity"/>
    <property type="evidence" value="ECO:0007669"/>
    <property type="project" value="UniProtKB-UniRule"/>
</dbReference>
<dbReference type="GO" id="GO:0032790">
    <property type="term" value="P:ribosome disassembly"/>
    <property type="evidence" value="ECO:0007669"/>
    <property type="project" value="TreeGrafter"/>
</dbReference>
<dbReference type="CDD" id="cd01886">
    <property type="entry name" value="EF-G"/>
    <property type="match status" value="1"/>
</dbReference>
<dbReference type="CDD" id="cd16262">
    <property type="entry name" value="EFG_III"/>
    <property type="match status" value="1"/>
</dbReference>
<dbReference type="CDD" id="cd01434">
    <property type="entry name" value="EFG_mtEFG1_IV"/>
    <property type="match status" value="1"/>
</dbReference>
<dbReference type="CDD" id="cd03713">
    <property type="entry name" value="EFG_mtEFG_C"/>
    <property type="match status" value="1"/>
</dbReference>
<dbReference type="CDD" id="cd04088">
    <property type="entry name" value="EFG_mtEFG_II"/>
    <property type="match status" value="1"/>
</dbReference>
<dbReference type="FunFam" id="2.40.30.10:FF:000006">
    <property type="entry name" value="Elongation factor G"/>
    <property type="match status" value="1"/>
</dbReference>
<dbReference type="FunFam" id="3.30.230.10:FF:000003">
    <property type="entry name" value="Elongation factor G"/>
    <property type="match status" value="1"/>
</dbReference>
<dbReference type="FunFam" id="3.30.70.240:FF:000001">
    <property type="entry name" value="Elongation factor G"/>
    <property type="match status" value="1"/>
</dbReference>
<dbReference type="FunFam" id="3.30.70.870:FF:000001">
    <property type="entry name" value="Elongation factor G"/>
    <property type="match status" value="1"/>
</dbReference>
<dbReference type="FunFam" id="3.40.50.300:FF:000029">
    <property type="entry name" value="Elongation factor G"/>
    <property type="match status" value="1"/>
</dbReference>
<dbReference type="Gene3D" id="3.30.230.10">
    <property type="match status" value="1"/>
</dbReference>
<dbReference type="Gene3D" id="3.30.70.240">
    <property type="match status" value="1"/>
</dbReference>
<dbReference type="Gene3D" id="3.30.70.870">
    <property type="entry name" value="Elongation Factor G (Translational Gtpase), domain 3"/>
    <property type="match status" value="1"/>
</dbReference>
<dbReference type="Gene3D" id="3.40.50.300">
    <property type="entry name" value="P-loop containing nucleotide triphosphate hydrolases"/>
    <property type="match status" value="1"/>
</dbReference>
<dbReference type="Gene3D" id="2.40.30.10">
    <property type="entry name" value="Translation factors"/>
    <property type="match status" value="1"/>
</dbReference>
<dbReference type="HAMAP" id="MF_00054_B">
    <property type="entry name" value="EF_G_EF_2_B"/>
    <property type="match status" value="1"/>
</dbReference>
<dbReference type="InterPro" id="IPR041095">
    <property type="entry name" value="EFG_II"/>
</dbReference>
<dbReference type="InterPro" id="IPR009022">
    <property type="entry name" value="EFG_III"/>
</dbReference>
<dbReference type="InterPro" id="IPR035647">
    <property type="entry name" value="EFG_III/V"/>
</dbReference>
<dbReference type="InterPro" id="IPR047872">
    <property type="entry name" value="EFG_IV"/>
</dbReference>
<dbReference type="InterPro" id="IPR035649">
    <property type="entry name" value="EFG_V"/>
</dbReference>
<dbReference type="InterPro" id="IPR000640">
    <property type="entry name" value="EFG_V-like"/>
</dbReference>
<dbReference type="InterPro" id="IPR004161">
    <property type="entry name" value="EFTu-like_2"/>
</dbReference>
<dbReference type="InterPro" id="IPR031157">
    <property type="entry name" value="G_TR_CS"/>
</dbReference>
<dbReference type="InterPro" id="IPR027417">
    <property type="entry name" value="P-loop_NTPase"/>
</dbReference>
<dbReference type="InterPro" id="IPR020568">
    <property type="entry name" value="Ribosomal_Su5_D2-typ_SF"/>
</dbReference>
<dbReference type="InterPro" id="IPR014721">
    <property type="entry name" value="Ribsml_uS5_D2-typ_fold_subgr"/>
</dbReference>
<dbReference type="InterPro" id="IPR005225">
    <property type="entry name" value="Small_GTP-bd"/>
</dbReference>
<dbReference type="InterPro" id="IPR000795">
    <property type="entry name" value="T_Tr_GTP-bd_dom"/>
</dbReference>
<dbReference type="InterPro" id="IPR009000">
    <property type="entry name" value="Transl_B-barrel_sf"/>
</dbReference>
<dbReference type="InterPro" id="IPR004540">
    <property type="entry name" value="Transl_elong_EFG/EF2"/>
</dbReference>
<dbReference type="InterPro" id="IPR005517">
    <property type="entry name" value="Transl_elong_EFG/EF2_IV"/>
</dbReference>
<dbReference type="NCBIfam" id="TIGR00484">
    <property type="entry name" value="EF-G"/>
    <property type="match status" value="1"/>
</dbReference>
<dbReference type="NCBIfam" id="NF009381">
    <property type="entry name" value="PRK12740.1-5"/>
    <property type="match status" value="1"/>
</dbReference>
<dbReference type="NCBIfam" id="TIGR00231">
    <property type="entry name" value="small_GTP"/>
    <property type="match status" value="1"/>
</dbReference>
<dbReference type="PANTHER" id="PTHR43261:SF1">
    <property type="entry name" value="RIBOSOME-RELEASING FACTOR 2, MITOCHONDRIAL"/>
    <property type="match status" value="1"/>
</dbReference>
<dbReference type="PANTHER" id="PTHR43261">
    <property type="entry name" value="TRANSLATION ELONGATION FACTOR G-RELATED"/>
    <property type="match status" value="1"/>
</dbReference>
<dbReference type="Pfam" id="PF00679">
    <property type="entry name" value="EFG_C"/>
    <property type="match status" value="1"/>
</dbReference>
<dbReference type="Pfam" id="PF14492">
    <property type="entry name" value="EFG_III"/>
    <property type="match status" value="1"/>
</dbReference>
<dbReference type="Pfam" id="PF03764">
    <property type="entry name" value="EFG_IV"/>
    <property type="match status" value="1"/>
</dbReference>
<dbReference type="Pfam" id="PF00009">
    <property type="entry name" value="GTP_EFTU"/>
    <property type="match status" value="1"/>
</dbReference>
<dbReference type="Pfam" id="PF03144">
    <property type="entry name" value="GTP_EFTU_D2"/>
    <property type="match status" value="1"/>
</dbReference>
<dbReference type="PRINTS" id="PR00315">
    <property type="entry name" value="ELONGATNFCT"/>
</dbReference>
<dbReference type="SMART" id="SM00838">
    <property type="entry name" value="EFG_C"/>
    <property type="match status" value="1"/>
</dbReference>
<dbReference type="SMART" id="SM00889">
    <property type="entry name" value="EFG_IV"/>
    <property type="match status" value="1"/>
</dbReference>
<dbReference type="SUPFAM" id="SSF54980">
    <property type="entry name" value="EF-G C-terminal domain-like"/>
    <property type="match status" value="2"/>
</dbReference>
<dbReference type="SUPFAM" id="SSF52540">
    <property type="entry name" value="P-loop containing nucleoside triphosphate hydrolases"/>
    <property type="match status" value="1"/>
</dbReference>
<dbReference type="SUPFAM" id="SSF54211">
    <property type="entry name" value="Ribosomal protein S5 domain 2-like"/>
    <property type="match status" value="1"/>
</dbReference>
<dbReference type="SUPFAM" id="SSF50447">
    <property type="entry name" value="Translation proteins"/>
    <property type="match status" value="1"/>
</dbReference>
<dbReference type="PROSITE" id="PS00301">
    <property type="entry name" value="G_TR_1"/>
    <property type="match status" value="1"/>
</dbReference>
<dbReference type="PROSITE" id="PS51722">
    <property type="entry name" value="G_TR_2"/>
    <property type="match status" value="1"/>
</dbReference>